<protein>
    <recommendedName>
        <fullName evidence="1">ATP-dependent protease ATPase subunit HslU</fullName>
    </recommendedName>
    <alternativeName>
        <fullName evidence="1">Unfoldase HslU</fullName>
    </alternativeName>
</protein>
<gene>
    <name evidence="1" type="primary">hslU</name>
    <name type="ordered locus">CC_3728</name>
</gene>
<keyword id="KW-0067">ATP-binding</keyword>
<keyword id="KW-0143">Chaperone</keyword>
<keyword id="KW-0963">Cytoplasm</keyword>
<keyword id="KW-0547">Nucleotide-binding</keyword>
<keyword id="KW-1185">Reference proteome</keyword>
<comment type="function">
    <text evidence="1">ATPase subunit of a proteasome-like degradation complex; this subunit has chaperone activity. The binding of ATP and its subsequent hydrolysis by HslU are essential for unfolding of protein substrates subsequently hydrolyzed by HslV. HslU recognizes the N-terminal part of its protein substrates and unfolds these before they are guided to HslV for hydrolysis.</text>
</comment>
<comment type="subunit">
    <text evidence="1">A double ring-shaped homohexamer of HslV is capped on each side by a ring-shaped HslU homohexamer. The assembly of the HslU/HslV complex is dependent on binding of ATP.</text>
</comment>
<comment type="subcellular location">
    <subcellularLocation>
        <location evidence="1">Cytoplasm</location>
    </subcellularLocation>
</comment>
<comment type="similarity">
    <text evidence="1">Belongs to the ClpX chaperone family. HslU subfamily.</text>
</comment>
<organism>
    <name type="scientific">Caulobacter vibrioides (strain ATCC 19089 / CIP 103742 / CB 15)</name>
    <name type="common">Caulobacter crescentus</name>
    <dbReference type="NCBI Taxonomy" id="190650"/>
    <lineage>
        <taxon>Bacteria</taxon>
        <taxon>Pseudomonadati</taxon>
        <taxon>Pseudomonadota</taxon>
        <taxon>Alphaproteobacteria</taxon>
        <taxon>Caulobacterales</taxon>
        <taxon>Caulobacteraceae</taxon>
        <taxon>Caulobacter</taxon>
    </lineage>
</organism>
<proteinExistence type="inferred from homology"/>
<feature type="chain" id="PRO_0000160494" description="ATP-dependent protease ATPase subunit HslU">
    <location>
        <begin position="1"/>
        <end position="430"/>
    </location>
</feature>
<feature type="binding site" evidence="1">
    <location>
        <position position="18"/>
    </location>
    <ligand>
        <name>ATP</name>
        <dbReference type="ChEBI" id="CHEBI:30616"/>
    </ligand>
</feature>
<feature type="binding site" evidence="1">
    <location>
        <begin position="60"/>
        <end position="65"/>
    </location>
    <ligand>
        <name>ATP</name>
        <dbReference type="ChEBI" id="CHEBI:30616"/>
    </ligand>
</feature>
<feature type="binding site" evidence="1">
    <location>
        <position position="243"/>
    </location>
    <ligand>
        <name>ATP</name>
        <dbReference type="ChEBI" id="CHEBI:30616"/>
    </ligand>
</feature>
<feature type="binding site" evidence="1">
    <location>
        <position position="308"/>
    </location>
    <ligand>
        <name>ATP</name>
        <dbReference type="ChEBI" id="CHEBI:30616"/>
    </ligand>
</feature>
<feature type="binding site" evidence="1">
    <location>
        <position position="380"/>
    </location>
    <ligand>
        <name>ATP</name>
        <dbReference type="ChEBI" id="CHEBI:30616"/>
    </ligand>
</feature>
<dbReference type="EMBL" id="AE005673">
    <property type="protein sequence ID" value="AAK25690.1"/>
    <property type="molecule type" value="Genomic_DNA"/>
</dbReference>
<dbReference type="PIR" id="F87711">
    <property type="entry name" value="F87711"/>
</dbReference>
<dbReference type="RefSeq" id="NP_422522.1">
    <property type="nucleotide sequence ID" value="NC_002696.2"/>
</dbReference>
<dbReference type="RefSeq" id="WP_010921555.1">
    <property type="nucleotide sequence ID" value="NC_002696.2"/>
</dbReference>
<dbReference type="SMR" id="Q9A238"/>
<dbReference type="STRING" id="190650.CC_3728"/>
<dbReference type="EnsemblBacteria" id="AAK25690">
    <property type="protein sequence ID" value="AAK25690"/>
    <property type="gene ID" value="CC_3728"/>
</dbReference>
<dbReference type="KEGG" id="ccr:CC_3728"/>
<dbReference type="PATRIC" id="fig|190650.5.peg.3730"/>
<dbReference type="eggNOG" id="COG1220">
    <property type="taxonomic scope" value="Bacteria"/>
</dbReference>
<dbReference type="HOGENOM" id="CLU_033123_0_0_5"/>
<dbReference type="BioCyc" id="CAULO:CC3728-MONOMER"/>
<dbReference type="Proteomes" id="UP000001816">
    <property type="component" value="Chromosome"/>
</dbReference>
<dbReference type="GO" id="GO:0009376">
    <property type="term" value="C:HslUV protease complex"/>
    <property type="evidence" value="ECO:0007669"/>
    <property type="project" value="UniProtKB-UniRule"/>
</dbReference>
<dbReference type="GO" id="GO:0005524">
    <property type="term" value="F:ATP binding"/>
    <property type="evidence" value="ECO:0007669"/>
    <property type="project" value="UniProtKB-UniRule"/>
</dbReference>
<dbReference type="GO" id="GO:0016887">
    <property type="term" value="F:ATP hydrolysis activity"/>
    <property type="evidence" value="ECO:0007669"/>
    <property type="project" value="InterPro"/>
</dbReference>
<dbReference type="GO" id="GO:0008233">
    <property type="term" value="F:peptidase activity"/>
    <property type="evidence" value="ECO:0007669"/>
    <property type="project" value="InterPro"/>
</dbReference>
<dbReference type="GO" id="GO:0036402">
    <property type="term" value="F:proteasome-activating activity"/>
    <property type="evidence" value="ECO:0007669"/>
    <property type="project" value="UniProtKB-UniRule"/>
</dbReference>
<dbReference type="GO" id="GO:0043335">
    <property type="term" value="P:protein unfolding"/>
    <property type="evidence" value="ECO:0007669"/>
    <property type="project" value="UniProtKB-UniRule"/>
</dbReference>
<dbReference type="GO" id="GO:0051603">
    <property type="term" value="P:proteolysis involved in protein catabolic process"/>
    <property type="evidence" value="ECO:0007669"/>
    <property type="project" value="TreeGrafter"/>
</dbReference>
<dbReference type="FunFam" id="3.40.50.300:FF:000213">
    <property type="entry name" value="ATP-dependent protease ATPase subunit HslU"/>
    <property type="match status" value="1"/>
</dbReference>
<dbReference type="FunFam" id="3.40.50.300:FF:000220">
    <property type="entry name" value="ATP-dependent protease ATPase subunit HslU"/>
    <property type="match status" value="1"/>
</dbReference>
<dbReference type="Gene3D" id="1.10.8.60">
    <property type="match status" value="1"/>
</dbReference>
<dbReference type="Gene3D" id="3.40.50.300">
    <property type="entry name" value="P-loop containing nucleotide triphosphate hydrolases"/>
    <property type="match status" value="2"/>
</dbReference>
<dbReference type="HAMAP" id="MF_00249">
    <property type="entry name" value="HslU"/>
    <property type="match status" value="1"/>
</dbReference>
<dbReference type="InterPro" id="IPR003593">
    <property type="entry name" value="AAA+_ATPase"/>
</dbReference>
<dbReference type="InterPro" id="IPR050052">
    <property type="entry name" value="ATP-dep_Clp_protease_ClpX"/>
</dbReference>
<dbReference type="InterPro" id="IPR003959">
    <property type="entry name" value="ATPase_AAA_core"/>
</dbReference>
<dbReference type="InterPro" id="IPR019489">
    <property type="entry name" value="Clp_ATPase_C"/>
</dbReference>
<dbReference type="InterPro" id="IPR004491">
    <property type="entry name" value="HslU"/>
</dbReference>
<dbReference type="InterPro" id="IPR027417">
    <property type="entry name" value="P-loop_NTPase"/>
</dbReference>
<dbReference type="NCBIfam" id="TIGR00390">
    <property type="entry name" value="hslU"/>
    <property type="match status" value="1"/>
</dbReference>
<dbReference type="NCBIfam" id="NF003544">
    <property type="entry name" value="PRK05201.1"/>
    <property type="match status" value="1"/>
</dbReference>
<dbReference type="PANTHER" id="PTHR48102">
    <property type="entry name" value="ATP-DEPENDENT CLP PROTEASE ATP-BINDING SUBUNIT CLPX-LIKE, MITOCHONDRIAL-RELATED"/>
    <property type="match status" value="1"/>
</dbReference>
<dbReference type="PANTHER" id="PTHR48102:SF3">
    <property type="entry name" value="ATP-DEPENDENT PROTEASE ATPASE SUBUNIT HSLU"/>
    <property type="match status" value="1"/>
</dbReference>
<dbReference type="Pfam" id="PF00004">
    <property type="entry name" value="AAA"/>
    <property type="match status" value="1"/>
</dbReference>
<dbReference type="Pfam" id="PF07724">
    <property type="entry name" value="AAA_2"/>
    <property type="match status" value="1"/>
</dbReference>
<dbReference type="Pfam" id="PF10431">
    <property type="entry name" value="ClpB_D2-small"/>
    <property type="match status" value="1"/>
</dbReference>
<dbReference type="SMART" id="SM00382">
    <property type="entry name" value="AAA"/>
    <property type="match status" value="1"/>
</dbReference>
<dbReference type="SMART" id="SM01086">
    <property type="entry name" value="ClpB_D2-small"/>
    <property type="match status" value="1"/>
</dbReference>
<dbReference type="SUPFAM" id="SSF52540">
    <property type="entry name" value="P-loop containing nucleoside triphosphate hydrolases"/>
    <property type="match status" value="1"/>
</dbReference>
<evidence type="ECO:0000255" key="1">
    <source>
        <dbReference type="HAMAP-Rule" id="MF_00249"/>
    </source>
</evidence>
<reference key="1">
    <citation type="journal article" date="2001" name="Proc. Natl. Acad. Sci. U.S.A.">
        <title>Complete genome sequence of Caulobacter crescentus.</title>
        <authorList>
            <person name="Nierman W.C."/>
            <person name="Feldblyum T.V."/>
            <person name="Laub M.T."/>
            <person name="Paulsen I.T."/>
            <person name="Nelson K.E."/>
            <person name="Eisen J.A."/>
            <person name="Heidelberg J.F."/>
            <person name="Alley M.R.K."/>
            <person name="Ohta N."/>
            <person name="Maddock J.R."/>
            <person name="Potocka I."/>
            <person name="Nelson W.C."/>
            <person name="Newton A."/>
            <person name="Stephens C."/>
            <person name="Phadke N.D."/>
            <person name="Ely B."/>
            <person name="DeBoy R.T."/>
            <person name="Dodson R.J."/>
            <person name="Durkin A.S."/>
            <person name="Gwinn M.L."/>
            <person name="Haft D.H."/>
            <person name="Kolonay J.F."/>
            <person name="Smit J."/>
            <person name="Craven M.B."/>
            <person name="Khouri H.M."/>
            <person name="Shetty J."/>
            <person name="Berry K.J."/>
            <person name="Utterback T.R."/>
            <person name="Tran K."/>
            <person name="Wolf A.M."/>
            <person name="Vamathevan J.J."/>
            <person name="Ermolaeva M.D."/>
            <person name="White O."/>
            <person name="Salzberg S.L."/>
            <person name="Venter J.C."/>
            <person name="Shapiro L."/>
            <person name="Fraser C.M."/>
        </authorList>
    </citation>
    <scope>NUCLEOTIDE SEQUENCE [LARGE SCALE GENOMIC DNA]</scope>
    <source>
        <strain>ATCC 19089 / CIP 103742 / CB 15</strain>
    </source>
</reference>
<sequence length="430" mass="46700">MTEFSPREIVSELDRYIVGHAEAKKAVAVALRNRWRRRRVPADLRDEVTPKNILLIGPTGVGKTEIARRLAKLAQAPFLKVEATKFTEVGYVGRDVDQIVRDLVESALAMVREKRRAAVKAKAEGGAEERILDALTGPGSTAARESFRKKLRAGELDDKEVELQLADTGGPSFDIPGQPGAAVFNLSDMMKSLGGGRTKTHKTTVSGAWAPLIAEESDKLLDQEALTQEALELAENHGIVFLDEIDKVASSSQRSGADVSREGVQRDLLPLIEGTTVSTKYGPVKTDHILFIASGAFHVAKPSDLLPELQGRLPIRVELKGLSRDDMRRILTEPEANLIRQHQALMATEEVTLVFTDEAIDALADAAVAVNGSVENIGARRLQTVMEKVVEEISFTAADRGGETVTIDAAYVQERVGALAANADLSRFIL</sequence>
<name>HSLU_CAUVC</name>
<accession>Q9A238</accession>